<dbReference type="EC" id="7.-.-.-" evidence="1"/>
<dbReference type="EMBL" id="AE017244">
    <property type="protein sequence ID" value="AAZ53637.1"/>
    <property type="molecule type" value="Genomic_DNA"/>
</dbReference>
<dbReference type="RefSeq" id="WP_011205954.1">
    <property type="nucleotide sequence ID" value="NC_007332.1"/>
</dbReference>
<dbReference type="SMR" id="Q4A8A2"/>
<dbReference type="KEGG" id="mhp:MHP7448_0263"/>
<dbReference type="HOGENOM" id="CLU_000604_1_22_14"/>
<dbReference type="Proteomes" id="UP000000553">
    <property type="component" value="Chromosome"/>
</dbReference>
<dbReference type="GO" id="GO:0043190">
    <property type="term" value="C:ATP-binding cassette (ABC) transporter complex"/>
    <property type="evidence" value="ECO:0007669"/>
    <property type="project" value="TreeGrafter"/>
</dbReference>
<dbReference type="GO" id="GO:0005524">
    <property type="term" value="F:ATP binding"/>
    <property type="evidence" value="ECO:0007669"/>
    <property type="project" value="UniProtKB-KW"/>
</dbReference>
<dbReference type="GO" id="GO:0016887">
    <property type="term" value="F:ATP hydrolysis activity"/>
    <property type="evidence" value="ECO:0007669"/>
    <property type="project" value="InterPro"/>
</dbReference>
<dbReference type="GO" id="GO:0042626">
    <property type="term" value="F:ATPase-coupled transmembrane transporter activity"/>
    <property type="evidence" value="ECO:0007669"/>
    <property type="project" value="TreeGrafter"/>
</dbReference>
<dbReference type="CDD" id="cd03225">
    <property type="entry name" value="ABC_cobalt_CbiO_domain1"/>
    <property type="match status" value="1"/>
</dbReference>
<dbReference type="FunFam" id="3.40.50.300:FF:000224">
    <property type="entry name" value="Energy-coupling factor transporter ATP-binding protein EcfA"/>
    <property type="match status" value="1"/>
</dbReference>
<dbReference type="Gene3D" id="3.40.50.300">
    <property type="entry name" value="P-loop containing nucleotide triphosphate hydrolases"/>
    <property type="match status" value="1"/>
</dbReference>
<dbReference type="InterPro" id="IPR003593">
    <property type="entry name" value="AAA+_ATPase"/>
</dbReference>
<dbReference type="InterPro" id="IPR003439">
    <property type="entry name" value="ABC_transporter-like_ATP-bd"/>
</dbReference>
<dbReference type="InterPro" id="IPR017871">
    <property type="entry name" value="ABC_transporter-like_CS"/>
</dbReference>
<dbReference type="InterPro" id="IPR015856">
    <property type="entry name" value="ABC_transpr_CbiO/EcfA_su"/>
</dbReference>
<dbReference type="InterPro" id="IPR050095">
    <property type="entry name" value="ECF_ABC_transporter_ATP-bd"/>
</dbReference>
<dbReference type="InterPro" id="IPR030947">
    <property type="entry name" value="EcfA_1"/>
</dbReference>
<dbReference type="InterPro" id="IPR027417">
    <property type="entry name" value="P-loop_NTPase"/>
</dbReference>
<dbReference type="NCBIfam" id="TIGR04520">
    <property type="entry name" value="ECF_ATPase_1"/>
    <property type="match status" value="1"/>
</dbReference>
<dbReference type="NCBIfam" id="NF010167">
    <property type="entry name" value="PRK13648.1"/>
    <property type="match status" value="1"/>
</dbReference>
<dbReference type="PANTHER" id="PTHR43553:SF24">
    <property type="entry name" value="ENERGY-COUPLING FACTOR TRANSPORTER ATP-BINDING PROTEIN ECFA1"/>
    <property type="match status" value="1"/>
</dbReference>
<dbReference type="PANTHER" id="PTHR43553">
    <property type="entry name" value="HEAVY METAL TRANSPORTER"/>
    <property type="match status" value="1"/>
</dbReference>
<dbReference type="Pfam" id="PF00005">
    <property type="entry name" value="ABC_tran"/>
    <property type="match status" value="1"/>
</dbReference>
<dbReference type="SMART" id="SM00382">
    <property type="entry name" value="AAA"/>
    <property type="match status" value="1"/>
</dbReference>
<dbReference type="SUPFAM" id="SSF52540">
    <property type="entry name" value="P-loop containing nucleoside triphosphate hydrolases"/>
    <property type="match status" value="1"/>
</dbReference>
<dbReference type="PROSITE" id="PS00211">
    <property type="entry name" value="ABC_TRANSPORTER_1"/>
    <property type="match status" value="1"/>
</dbReference>
<dbReference type="PROSITE" id="PS50893">
    <property type="entry name" value="ABC_TRANSPORTER_2"/>
    <property type="match status" value="1"/>
</dbReference>
<dbReference type="PROSITE" id="PS51246">
    <property type="entry name" value="CBIO"/>
    <property type="match status" value="1"/>
</dbReference>
<proteinExistence type="inferred from homology"/>
<accession>Q4A8A2</accession>
<reference key="1">
    <citation type="journal article" date="2005" name="J. Bacteriol.">
        <title>Swine and poultry pathogens: the complete genome sequences of two strains of Mycoplasma hyopneumoniae and a strain of Mycoplasma synoviae.</title>
        <authorList>
            <person name="Vasconcelos A.T.R."/>
            <person name="Ferreira H.B."/>
            <person name="Bizarro C.V."/>
            <person name="Bonatto S.L."/>
            <person name="Carvalho M.O."/>
            <person name="Pinto P.M."/>
            <person name="Almeida D.F."/>
            <person name="Almeida L.G.P."/>
            <person name="Almeida R."/>
            <person name="Alves-Junior L."/>
            <person name="Assuncao E.N."/>
            <person name="Azevedo V.A.C."/>
            <person name="Bogo M.R."/>
            <person name="Brigido M.M."/>
            <person name="Brocchi M."/>
            <person name="Burity H.A."/>
            <person name="Camargo A.A."/>
            <person name="Camargo S.S."/>
            <person name="Carepo M.S."/>
            <person name="Carraro D.M."/>
            <person name="de Mattos Cascardo J.C."/>
            <person name="Castro L.A."/>
            <person name="Cavalcanti G."/>
            <person name="Chemale G."/>
            <person name="Collevatti R.G."/>
            <person name="Cunha C.W."/>
            <person name="Dallagiovanna B."/>
            <person name="Dambros B.P."/>
            <person name="Dellagostin O.A."/>
            <person name="Falcao C."/>
            <person name="Fantinatti-Garboggini F."/>
            <person name="Felipe M.S.S."/>
            <person name="Fiorentin L."/>
            <person name="Franco G.R."/>
            <person name="Freitas N.S.A."/>
            <person name="Frias D."/>
            <person name="Grangeiro T.B."/>
            <person name="Grisard E.C."/>
            <person name="Guimaraes C.T."/>
            <person name="Hungria M."/>
            <person name="Jardim S.N."/>
            <person name="Krieger M.A."/>
            <person name="Laurino J.P."/>
            <person name="Lima L.F.A."/>
            <person name="Lopes M.I."/>
            <person name="Loreto E.L.S."/>
            <person name="Madeira H.M.F."/>
            <person name="Manfio G.P."/>
            <person name="Maranhao A.Q."/>
            <person name="Martinkovics C.T."/>
            <person name="Medeiros S.R.B."/>
            <person name="Moreira M.A.M."/>
            <person name="Neiva M."/>
            <person name="Ramalho-Neto C.E."/>
            <person name="Nicolas M.F."/>
            <person name="Oliveira S.C."/>
            <person name="Paixao R.F.C."/>
            <person name="Pedrosa F.O."/>
            <person name="Pena S.D.J."/>
            <person name="Pereira M."/>
            <person name="Pereira-Ferrari L."/>
            <person name="Piffer I."/>
            <person name="Pinto L.S."/>
            <person name="Potrich D.P."/>
            <person name="Salim A.C.M."/>
            <person name="Santos F.R."/>
            <person name="Schmitt R."/>
            <person name="Schneider M.P.C."/>
            <person name="Schrank A."/>
            <person name="Schrank I.S."/>
            <person name="Schuck A.F."/>
            <person name="Seuanez H.N."/>
            <person name="Silva D.W."/>
            <person name="Silva R."/>
            <person name="Silva S.C."/>
            <person name="Soares C.M.A."/>
            <person name="Souza K.R.L."/>
            <person name="Souza R.C."/>
            <person name="Staats C.C."/>
            <person name="Steffens M.B.R."/>
            <person name="Teixeira S.M.R."/>
            <person name="Urmenyi T.P."/>
            <person name="Vainstein M.H."/>
            <person name="Zuccherato L.W."/>
            <person name="Simpson A.J.G."/>
            <person name="Zaha A."/>
        </authorList>
    </citation>
    <scope>NUCLEOTIDE SEQUENCE [LARGE SCALE GENOMIC DNA]</scope>
    <source>
        <strain>7448</strain>
    </source>
</reference>
<keyword id="KW-0067">ATP-binding</keyword>
<keyword id="KW-1003">Cell membrane</keyword>
<keyword id="KW-0472">Membrane</keyword>
<keyword id="KW-0547">Nucleotide-binding</keyword>
<keyword id="KW-1278">Translocase</keyword>
<keyword id="KW-0813">Transport</keyword>
<organism>
    <name type="scientific">Mesomycoplasma hyopneumoniae (strain 7448)</name>
    <name type="common">Mycoplasma hyopneumoniae</name>
    <dbReference type="NCBI Taxonomy" id="262722"/>
    <lineage>
        <taxon>Bacteria</taxon>
        <taxon>Bacillati</taxon>
        <taxon>Mycoplasmatota</taxon>
        <taxon>Mycoplasmoidales</taxon>
        <taxon>Metamycoplasmataceae</taxon>
        <taxon>Mesomycoplasma</taxon>
    </lineage>
</organism>
<sequence>MIKVSDVCFSYTNNMDQLVLKNINVVFEKGKYYAILGHNGSGKSTFSKILSGIFKPQKGSIEVDGVLLNKENLTKIRKKIGIIFQNPDNQFVGATVEDDIAFSLENINEDPKKMSQIIANLAAKVQMESYLDREPQFLSGGQKQRVAIASVLALNPEIIIFDEITSMLDPRGKYDVVKILDDLRKDKTKTLISITHNMNEAILADEIIVFANGGIIAQGDPKLILNDKNIIEKAKIDSPFIYKISSALKLVSPTYDENELLEQLWKLKQKTS</sequence>
<comment type="function">
    <text evidence="1">ATP-binding (A) component of a common energy-coupling factor (ECF) ABC-transporter complex. Unlike classic ABC transporters this ECF transporter provides the energy necessary to transport a number of different substrates.</text>
</comment>
<comment type="subunit">
    <text evidence="1">Forms a stable energy-coupling factor (ECF) transporter complex composed of 2 membrane-embedded substrate-binding proteins (S component), 2 ATP-binding proteins (A component) and 2 transmembrane proteins (T component).</text>
</comment>
<comment type="subcellular location">
    <subcellularLocation>
        <location evidence="1">Cell membrane</location>
        <topology evidence="1">Peripheral membrane protein</topology>
    </subcellularLocation>
</comment>
<comment type="similarity">
    <text evidence="1">Belongs to the ABC transporter superfamily. Energy-coupling factor EcfA family.</text>
</comment>
<feature type="chain" id="PRO_0000287970" description="Energy-coupling factor transporter ATP-binding protein EcfA1">
    <location>
        <begin position="1"/>
        <end position="272"/>
    </location>
</feature>
<feature type="domain" description="ABC transporter" evidence="1">
    <location>
        <begin position="2"/>
        <end position="237"/>
    </location>
</feature>
<feature type="binding site" evidence="1">
    <location>
        <begin position="37"/>
        <end position="44"/>
    </location>
    <ligand>
        <name>ATP</name>
        <dbReference type="ChEBI" id="CHEBI:30616"/>
    </ligand>
</feature>
<protein>
    <recommendedName>
        <fullName evidence="1">Energy-coupling factor transporter ATP-binding protein EcfA1</fullName>
        <shortName evidence="1">ECF transporter A component EcfA1</shortName>
        <ecNumber evidence="1">7.-.-.-</ecNumber>
    </recommendedName>
</protein>
<evidence type="ECO:0000255" key="1">
    <source>
        <dbReference type="HAMAP-Rule" id="MF_01710"/>
    </source>
</evidence>
<gene>
    <name evidence="1" type="primary">ecfA1</name>
    <name type="synonym">cbiO1</name>
    <name type="ordered locus">MHP7448_0263</name>
</gene>
<name>ECFA1_MESH7</name>